<protein>
    <recommendedName>
        <fullName evidence="1">Succinyl-diaminopimelate desuccinylase</fullName>
        <shortName evidence="1">SDAP desuccinylase</shortName>
        <ecNumber evidence="1">3.5.1.18</ecNumber>
    </recommendedName>
    <alternativeName>
        <fullName evidence="1">N-succinyl-LL-2,6-diaminoheptanedioate amidohydrolase</fullName>
    </alternativeName>
</protein>
<gene>
    <name evidence="1" type="primary">dapE</name>
    <name type="ordered locus">Bcep1808_1938</name>
</gene>
<feature type="chain" id="PRO_0000375514" description="Succinyl-diaminopimelate desuccinylase">
    <location>
        <begin position="1"/>
        <end position="379"/>
    </location>
</feature>
<feature type="active site" evidence="1">
    <location>
        <position position="72"/>
    </location>
</feature>
<feature type="active site" description="Proton acceptor" evidence="1">
    <location>
        <position position="137"/>
    </location>
</feature>
<feature type="binding site" evidence="1">
    <location>
        <position position="70"/>
    </location>
    <ligand>
        <name>Zn(2+)</name>
        <dbReference type="ChEBI" id="CHEBI:29105"/>
        <label>1</label>
    </ligand>
</feature>
<feature type="binding site" evidence="1">
    <location>
        <position position="103"/>
    </location>
    <ligand>
        <name>Zn(2+)</name>
        <dbReference type="ChEBI" id="CHEBI:29105"/>
        <label>1</label>
    </ligand>
</feature>
<feature type="binding site" evidence="1">
    <location>
        <position position="103"/>
    </location>
    <ligand>
        <name>Zn(2+)</name>
        <dbReference type="ChEBI" id="CHEBI:29105"/>
        <label>2</label>
    </ligand>
</feature>
<feature type="binding site" evidence="1">
    <location>
        <position position="138"/>
    </location>
    <ligand>
        <name>Zn(2+)</name>
        <dbReference type="ChEBI" id="CHEBI:29105"/>
        <label>2</label>
    </ligand>
</feature>
<feature type="binding site" evidence="1">
    <location>
        <position position="166"/>
    </location>
    <ligand>
        <name>Zn(2+)</name>
        <dbReference type="ChEBI" id="CHEBI:29105"/>
        <label>1</label>
    </ligand>
</feature>
<feature type="binding site" evidence="1">
    <location>
        <position position="352"/>
    </location>
    <ligand>
        <name>Zn(2+)</name>
        <dbReference type="ChEBI" id="CHEBI:29105"/>
        <label>2</label>
    </ligand>
</feature>
<sequence>MSATLALTEQLIARASVTPDDQHCQQIMTERLAALGFECETIASHGVTNLWAVKRGTAGRDGKLLAFAGHTDVVPTGPLEQWTSPPFIPAHRDGKLYGRGAADMKTSLAAFIVASEEFVAAHPDHRGAIAFLITSDEEGPATDGTVKVVELLDARGEQLDYCIVGEPTSSAELGDVVKNGRRGSMSGELIVKGVQGHIAYPHLAKNPIHLLAPALAELAAEQWDAGNEYFPPTTWQVSNLRAGTGATNVIPGHADLMFNFRFSTASTVEGLQARVHAILDKHGLDYTLKWSVSGLPFLTPRGELSNALEHAIRAETGVTTELSTTGGTSDGRFIARICPQVIEFGPPNGSIHKIDEHIELRFVDPLKNVYRRVLEQLIA</sequence>
<accession>A4JF88</accession>
<organism>
    <name type="scientific">Burkholderia vietnamiensis (strain G4 / LMG 22486)</name>
    <name type="common">Burkholderia cepacia (strain R1808)</name>
    <dbReference type="NCBI Taxonomy" id="269482"/>
    <lineage>
        <taxon>Bacteria</taxon>
        <taxon>Pseudomonadati</taxon>
        <taxon>Pseudomonadota</taxon>
        <taxon>Betaproteobacteria</taxon>
        <taxon>Burkholderiales</taxon>
        <taxon>Burkholderiaceae</taxon>
        <taxon>Burkholderia</taxon>
        <taxon>Burkholderia cepacia complex</taxon>
    </lineage>
</organism>
<keyword id="KW-0028">Amino-acid biosynthesis</keyword>
<keyword id="KW-0170">Cobalt</keyword>
<keyword id="KW-0220">Diaminopimelate biosynthesis</keyword>
<keyword id="KW-0378">Hydrolase</keyword>
<keyword id="KW-0457">Lysine biosynthesis</keyword>
<keyword id="KW-0479">Metal-binding</keyword>
<keyword id="KW-0862">Zinc</keyword>
<evidence type="ECO:0000255" key="1">
    <source>
        <dbReference type="HAMAP-Rule" id="MF_01690"/>
    </source>
</evidence>
<comment type="function">
    <text evidence="1">Catalyzes the hydrolysis of N-succinyl-L,L-diaminopimelic acid (SDAP), forming succinate and LL-2,6-diaminopimelate (DAP), an intermediate involved in the bacterial biosynthesis of lysine and meso-diaminopimelic acid, an essential component of bacterial cell walls.</text>
</comment>
<comment type="catalytic activity">
    <reaction evidence="1">
        <text>N-succinyl-(2S,6S)-2,6-diaminopimelate + H2O = (2S,6S)-2,6-diaminopimelate + succinate</text>
        <dbReference type="Rhea" id="RHEA:22608"/>
        <dbReference type="ChEBI" id="CHEBI:15377"/>
        <dbReference type="ChEBI" id="CHEBI:30031"/>
        <dbReference type="ChEBI" id="CHEBI:57609"/>
        <dbReference type="ChEBI" id="CHEBI:58087"/>
        <dbReference type="EC" id="3.5.1.18"/>
    </reaction>
</comment>
<comment type="cofactor">
    <cofactor evidence="1">
        <name>Zn(2+)</name>
        <dbReference type="ChEBI" id="CHEBI:29105"/>
    </cofactor>
    <cofactor evidence="1">
        <name>Co(2+)</name>
        <dbReference type="ChEBI" id="CHEBI:48828"/>
    </cofactor>
    <text evidence="1">Binds 2 Zn(2+) or Co(2+) ions per subunit.</text>
</comment>
<comment type="pathway">
    <text evidence="1">Amino-acid biosynthesis; L-lysine biosynthesis via DAP pathway; LL-2,6-diaminopimelate from (S)-tetrahydrodipicolinate (succinylase route): step 3/3.</text>
</comment>
<comment type="subunit">
    <text evidence="1">Homodimer.</text>
</comment>
<comment type="similarity">
    <text evidence="1">Belongs to the peptidase M20A family. DapE subfamily.</text>
</comment>
<name>DAPE_BURVG</name>
<dbReference type="EC" id="3.5.1.18" evidence="1"/>
<dbReference type="EMBL" id="CP000614">
    <property type="protein sequence ID" value="ABO54941.1"/>
    <property type="molecule type" value="Genomic_DNA"/>
</dbReference>
<dbReference type="SMR" id="A4JF88"/>
<dbReference type="KEGG" id="bvi:Bcep1808_1938"/>
<dbReference type="eggNOG" id="COG0624">
    <property type="taxonomic scope" value="Bacteria"/>
</dbReference>
<dbReference type="HOGENOM" id="CLU_021802_4_0_4"/>
<dbReference type="UniPathway" id="UPA00034">
    <property type="reaction ID" value="UER00021"/>
</dbReference>
<dbReference type="Proteomes" id="UP000002287">
    <property type="component" value="Chromosome 1"/>
</dbReference>
<dbReference type="GO" id="GO:0008777">
    <property type="term" value="F:acetylornithine deacetylase activity"/>
    <property type="evidence" value="ECO:0007669"/>
    <property type="project" value="TreeGrafter"/>
</dbReference>
<dbReference type="GO" id="GO:0050897">
    <property type="term" value="F:cobalt ion binding"/>
    <property type="evidence" value="ECO:0007669"/>
    <property type="project" value="UniProtKB-UniRule"/>
</dbReference>
<dbReference type="GO" id="GO:0009014">
    <property type="term" value="F:succinyl-diaminopimelate desuccinylase activity"/>
    <property type="evidence" value="ECO:0007669"/>
    <property type="project" value="UniProtKB-UniRule"/>
</dbReference>
<dbReference type="GO" id="GO:0008270">
    <property type="term" value="F:zinc ion binding"/>
    <property type="evidence" value="ECO:0007669"/>
    <property type="project" value="UniProtKB-UniRule"/>
</dbReference>
<dbReference type="GO" id="GO:0019877">
    <property type="term" value="P:diaminopimelate biosynthetic process"/>
    <property type="evidence" value="ECO:0007669"/>
    <property type="project" value="UniProtKB-UniRule"/>
</dbReference>
<dbReference type="GO" id="GO:0006526">
    <property type="term" value="P:L-arginine biosynthetic process"/>
    <property type="evidence" value="ECO:0007669"/>
    <property type="project" value="TreeGrafter"/>
</dbReference>
<dbReference type="GO" id="GO:0009089">
    <property type="term" value="P:lysine biosynthetic process via diaminopimelate"/>
    <property type="evidence" value="ECO:0007669"/>
    <property type="project" value="UniProtKB-UniRule"/>
</dbReference>
<dbReference type="CDD" id="cd03891">
    <property type="entry name" value="M20_DapE_proteobac"/>
    <property type="match status" value="1"/>
</dbReference>
<dbReference type="FunFam" id="3.30.70.360:FF:000011">
    <property type="entry name" value="Succinyl-diaminopimelate desuccinylase"/>
    <property type="match status" value="1"/>
</dbReference>
<dbReference type="FunFam" id="3.40.630.10:FF:000005">
    <property type="entry name" value="Succinyl-diaminopimelate desuccinylase"/>
    <property type="match status" value="1"/>
</dbReference>
<dbReference type="Gene3D" id="3.40.630.10">
    <property type="entry name" value="Zn peptidases"/>
    <property type="match status" value="2"/>
</dbReference>
<dbReference type="HAMAP" id="MF_01690">
    <property type="entry name" value="DapE"/>
    <property type="match status" value="1"/>
</dbReference>
<dbReference type="InterPro" id="IPR001261">
    <property type="entry name" value="ArgE/DapE_CS"/>
</dbReference>
<dbReference type="InterPro" id="IPR036264">
    <property type="entry name" value="Bact_exopeptidase_dim_dom"/>
</dbReference>
<dbReference type="InterPro" id="IPR005941">
    <property type="entry name" value="DapE_proteobac"/>
</dbReference>
<dbReference type="InterPro" id="IPR002933">
    <property type="entry name" value="Peptidase_M20"/>
</dbReference>
<dbReference type="InterPro" id="IPR011650">
    <property type="entry name" value="Peptidase_M20_dimer"/>
</dbReference>
<dbReference type="InterPro" id="IPR050072">
    <property type="entry name" value="Peptidase_M20A"/>
</dbReference>
<dbReference type="NCBIfam" id="TIGR01246">
    <property type="entry name" value="dapE_proteo"/>
    <property type="match status" value="1"/>
</dbReference>
<dbReference type="NCBIfam" id="NF009557">
    <property type="entry name" value="PRK13009.1"/>
    <property type="match status" value="1"/>
</dbReference>
<dbReference type="PANTHER" id="PTHR43808">
    <property type="entry name" value="ACETYLORNITHINE DEACETYLASE"/>
    <property type="match status" value="1"/>
</dbReference>
<dbReference type="PANTHER" id="PTHR43808:SF31">
    <property type="entry name" value="N-ACETYL-L-CITRULLINE DEACETYLASE"/>
    <property type="match status" value="1"/>
</dbReference>
<dbReference type="Pfam" id="PF07687">
    <property type="entry name" value="M20_dimer"/>
    <property type="match status" value="1"/>
</dbReference>
<dbReference type="Pfam" id="PF01546">
    <property type="entry name" value="Peptidase_M20"/>
    <property type="match status" value="1"/>
</dbReference>
<dbReference type="SUPFAM" id="SSF55031">
    <property type="entry name" value="Bacterial exopeptidase dimerisation domain"/>
    <property type="match status" value="1"/>
</dbReference>
<dbReference type="SUPFAM" id="SSF53187">
    <property type="entry name" value="Zn-dependent exopeptidases"/>
    <property type="match status" value="1"/>
</dbReference>
<dbReference type="PROSITE" id="PS00758">
    <property type="entry name" value="ARGE_DAPE_CPG2_1"/>
    <property type="match status" value="1"/>
</dbReference>
<proteinExistence type="inferred from homology"/>
<reference key="1">
    <citation type="submission" date="2007-03" db="EMBL/GenBank/DDBJ databases">
        <title>Complete sequence of chromosome 1 of Burkholderia vietnamiensis G4.</title>
        <authorList>
            <consortium name="US DOE Joint Genome Institute"/>
            <person name="Copeland A."/>
            <person name="Lucas S."/>
            <person name="Lapidus A."/>
            <person name="Barry K."/>
            <person name="Detter J.C."/>
            <person name="Glavina del Rio T."/>
            <person name="Hammon N."/>
            <person name="Israni S."/>
            <person name="Dalin E."/>
            <person name="Tice H."/>
            <person name="Pitluck S."/>
            <person name="Chain P."/>
            <person name="Malfatti S."/>
            <person name="Shin M."/>
            <person name="Vergez L."/>
            <person name="Schmutz J."/>
            <person name="Larimer F."/>
            <person name="Land M."/>
            <person name="Hauser L."/>
            <person name="Kyrpides N."/>
            <person name="Tiedje J."/>
            <person name="Richardson P."/>
        </authorList>
    </citation>
    <scope>NUCLEOTIDE SEQUENCE [LARGE SCALE GENOMIC DNA]</scope>
    <source>
        <strain>G4 / LMG 22486</strain>
    </source>
</reference>